<reference key="1">
    <citation type="journal article" date="1993" name="Oncogene">
        <title>Two new members of the maf oncogene family, mafK and mafF, encode nuclear b-Zip proteins lacking putative trans-activator domain.</title>
        <authorList>
            <person name="Fujiwara K.T."/>
            <person name="Kataoka K."/>
            <person name="Nishizawa M."/>
        </authorList>
    </citation>
    <scope>NUCLEOTIDE SEQUENCE [MRNA]</scope>
    <source>
        <tissue>Fibroblast</tissue>
    </source>
</reference>
<accession>Q90595</accession>
<sequence>MAADGLSSKALKVKRELGENTPLLSDEELMGLSVRELNHHLRGLSKEEVARLKQRRRTLKNRGYAASCRVKRVCQKEELQKQKMELEWEVDKLARENAAMRLELDTLRGKYEALQGFARTVAAHGPPAKVATASVITIVKSGANQAAYS</sequence>
<gene>
    <name type="primary">MAFF</name>
</gene>
<comment type="function">
    <text>Since it lacks a putative transactivation domain, it may behave as a transcriptional repressor when it dimerizes among itself. May also serve as a transcriptional activator by dimerizing with other (usually larger) basic-zipper proteins and recruiting them to specific DNA-binding sites. May be involved in the cellular stress response.</text>
</comment>
<comment type="subunit">
    <text evidence="1">Monomer and homo- or heterodimer.</text>
</comment>
<comment type="subcellular location">
    <subcellularLocation>
        <location>Nucleus</location>
    </subcellularLocation>
</comment>
<comment type="tissue specificity">
    <text>Highly expressed in the ovary, lower expression in the brain, heart and mesenterium.</text>
</comment>
<comment type="similarity">
    <text evidence="3">Belongs to the bZIP family. Maf subfamily.</text>
</comment>
<evidence type="ECO:0000250" key="1"/>
<evidence type="ECO:0000255" key="2">
    <source>
        <dbReference type="PROSITE-ProRule" id="PRU00978"/>
    </source>
</evidence>
<evidence type="ECO:0000305" key="3"/>
<dbReference type="EMBL" id="D16184">
    <property type="protein sequence ID" value="BAA03727.1"/>
    <property type="molecule type" value="mRNA"/>
</dbReference>
<dbReference type="PIR" id="B56253">
    <property type="entry name" value="B56253"/>
</dbReference>
<dbReference type="RefSeq" id="NP_990088.1">
    <property type="nucleotide sequence ID" value="NM_204757.2"/>
</dbReference>
<dbReference type="RefSeq" id="XP_015139935.1">
    <property type="nucleotide sequence ID" value="XM_015284449.4"/>
</dbReference>
<dbReference type="RefSeq" id="XP_046762577.1">
    <property type="nucleotide sequence ID" value="XM_046906621.1"/>
</dbReference>
<dbReference type="SMR" id="Q90595"/>
<dbReference type="FunCoup" id="Q90595">
    <property type="interactions" value="297"/>
</dbReference>
<dbReference type="MINT" id="Q90595"/>
<dbReference type="STRING" id="9031.ENSGALP00000020036"/>
<dbReference type="PaxDb" id="9031-ENSGALP00000020036"/>
<dbReference type="GeneID" id="395519"/>
<dbReference type="KEGG" id="gga:395519"/>
<dbReference type="CTD" id="23764"/>
<dbReference type="VEuPathDB" id="HostDB:geneid_395519"/>
<dbReference type="eggNOG" id="KOG4196">
    <property type="taxonomic scope" value="Eukaryota"/>
</dbReference>
<dbReference type="HOGENOM" id="CLU_112948_0_0_1"/>
<dbReference type="InParanoid" id="Q90595"/>
<dbReference type="OrthoDB" id="5974330at2759"/>
<dbReference type="PhylomeDB" id="Q90595"/>
<dbReference type="TreeFam" id="TF325689"/>
<dbReference type="PRO" id="PR:Q90595"/>
<dbReference type="Proteomes" id="UP000000539">
    <property type="component" value="Chromosome 1"/>
</dbReference>
<dbReference type="Bgee" id="ENSGALG00000012277">
    <property type="expression patterns" value="Expressed in granulocyte and 14 other cell types or tissues"/>
</dbReference>
<dbReference type="GO" id="GO:0005634">
    <property type="term" value="C:nucleus"/>
    <property type="evidence" value="ECO:0000318"/>
    <property type="project" value="GO_Central"/>
</dbReference>
<dbReference type="GO" id="GO:0000981">
    <property type="term" value="F:DNA-binding transcription factor activity, RNA polymerase II-specific"/>
    <property type="evidence" value="ECO:0000318"/>
    <property type="project" value="GO_Central"/>
</dbReference>
<dbReference type="GO" id="GO:0000978">
    <property type="term" value="F:RNA polymerase II cis-regulatory region sequence-specific DNA binding"/>
    <property type="evidence" value="ECO:0000318"/>
    <property type="project" value="GO_Central"/>
</dbReference>
<dbReference type="GO" id="GO:0045604">
    <property type="term" value="P:regulation of epidermal cell differentiation"/>
    <property type="evidence" value="ECO:0000318"/>
    <property type="project" value="GO_Central"/>
</dbReference>
<dbReference type="GO" id="GO:0006357">
    <property type="term" value="P:regulation of transcription by RNA polymerase II"/>
    <property type="evidence" value="ECO:0000318"/>
    <property type="project" value="GO_Central"/>
</dbReference>
<dbReference type="CDD" id="cd14717">
    <property type="entry name" value="bZIP_Maf_small"/>
    <property type="match status" value="1"/>
</dbReference>
<dbReference type="FunFam" id="1.20.5.170:FF:000011">
    <property type="entry name" value="Transcription factor MafG, putative"/>
    <property type="match status" value="1"/>
</dbReference>
<dbReference type="Gene3D" id="1.20.5.170">
    <property type="match status" value="1"/>
</dbReference>
<dbReference type="InterPro" id="IPR004827">
    <property type="entry name" value="bZIP"/>
</dbReference>
<dbReference type="InterPro" id="IPR004826">
    <property type="entry name" value="bZIP_Maf"/>
</dbReference>
<dbReference type="InterPro" id="IPR046347">
    <property type="entry name" value="bZIP_sf"/>
</dbReference>
<dbReference type="InterPro" id="IPR008917">
    <property type="entry name" value="TF_DNA-bd_sf"/>
</dbReference>
<dbReference type="InterPro" id="IPR024874">
    <property type="entry name" value="Transcription_factor_Maf_fam"/>
</dbReference>
<dbReference type="PANTHER" id="PTHR10129">
    <property type="entry name" value="TRANSCRIPTION FACTOR MAF"/>
    <property type="match status" value="1"/>
</dbReference>
<dbReference type="PANTHER" id="PTHR10129:SF25">
    <property type="entry name" value="TRANSCRIPTION FACTOR MAFF"/>
    <property type="match status" value="1"/>
</dbReference>
<dbReference type="Pfam" id="PF03131">
    <property type="entry name" value="bZIP_Maf"/>
    <property type="match status" value="1"/>
</dbReference>
<dbReference type="SMART" id="SM00338">
    <property type="entry name" value="BRLZ"/>
    <property type="match status" value="1"/>
</dbReference>
<dbReference type="SUPFAM" id="SSF47454">
    <property type="entry name" value="A DNA-binding domain in eukaryotic transcription factors"/>
    <property type="match status" value="1"/>
</dbReference>
<dbReference type="SUPFAM" id="SSF57959">
    <property type="entry name" value="Leucine zipper domain"/>
    <property type="match status" value="1"/>
</dbReference>
<dbReference type="PROSITE" id="PS50217">
    <property type="entry name" value="BZIP"/>
    <property type="match status" value="1"/>
</dbReference>
<protein>
    <recommendedName>
        <fullName>Transcription factor MafF</fullName>
    </recommendedName>
    <alternativeName>
        <fullName>V-maf musculoaponeurotic fibrosarcoma oncogene homolog F</fullName>
    </alternativeName>
</protein>
<name>MAFF_CHICK</name>
<keyword id="KW-0238">DNA-binding</keyword>
<keyword id="KW-0539">Nucleus</keyword>
<keyword id="KW-1185">Reference proteome</keyword>
<keyword id="KW-0678">Repressor</keyword>
<keyword id="KW-0804">Transcription</keyword>
<keyword id="KW-0805">Transcription regulation</keyword>
<organism>
    <name type="scientific">Gallus gallus</name>
    <name type="common">Chicken</name>
    <dbReference type="NCBI Taxonomy" id="9031"/>
    <lineage>
        <taxon>Eukaryota</taxon>
        <taxon>Metazoa</taxon>
        <taxon>Chordata</taxon>
        <taxon>Craniata</taxon>
        <taxon>Vertebrata</taxon>
        <taxon>Euteleostomi</taxon>
        <taxon>Archelosauria</taxon>
        <taxon>Archosauria</taxon>
        <taxon>Dinosauria</taxon>
        <taxon>Saurischia</taxon>
        <taxon>Theropoda</taxon>
        <taxon>Coelurosauria</taxon>
        <taxon>Aves</taxon>
        <taxon>Neognathae</taxon>
        <taxon>Galloanserae</taxon>
        <taxon>Galliformes</taxon>
        <taxon>Phasianidae</taxon>
        <taxon>Phasianinae</taxon>
        <taxon>Gallus</taxon>
    </lineage>
</organism>
<feature type="chain" id="PRO_0000076499" description="Transcription factor MafF">
    <location>
        <begin position="1"/>
        <end position="149"/>
    </location>
</feature>
<feature type="domain" description="bZIP" evidence="2">
    <location>
        <begin position="51"/>
        <end position="114"/>
    </location>
</feature>
<feature type="region of interest" description="Basic motif" evidence="2">
    <location>
        <begin position="51"/>
        <end position="76"/>
    </location>
</feature>
<feature type="region of interest" description="Leucine-zipper" evidence="2">
    <location>
        <begin position="79"/>
        <end position="93"/>
    </location>
</feature>
<proteinExistence type="evidence at transcript level"/>